<evidence type="ECO:0000255" key="1">
    <source>
        <dbReference type="HAMAP-Rule" id="MF_01631"/>
    </source>
</evidence>
<name>GLMU_SYNS3</name>
<sequence>MLAVAVLAAGKGTRMKSALPKVLQPLAGATLVERVLASARNLAPERRLLIVGHQAERVEAQLSSNGGLEFVLQQPQNGTGHAVQQLLAPLQGFQGELLVLNGDVPLLRAETIEALVSTHRSSQADVTLLTARLDDPTGYGRVFADANGRVSAIIEHRDCSDEQRSNNLTNAGIYCFNWGKLAEVLPQLSTDNDQGELYLTDTVQLLDVAMQMEVSDPDEVNGINNRRQLAQCEGVLQQRLRDHWMDEGVTFVDPASCTLSEDCSFGCDVVIEPQTHLRGACRIGDNCRLGPGSLLDNAELGCDVTVVQSVVRDARVGNDVAIGPFAHIRPATDVGDSCKIGNFVEIKKSVIAAGSKVNHLSYIGDAELGANVNVGAGTITANFDGTNKHLTVIGEGSKTGANSVLVAPVVIGKNVTIGAGSTITKAVPDGSLAIGRAKQLTKEGWDRNTQAAQS</sequence>
<protein>
    <recommendedName>
        <fullName evidence="1">Bifunctional protein GlmU</fullName>
    </recommendedName>
    <domain>
        <recommendedName>
            <fullName evidence="1">UDP-N-acetylglucosamine pyrophosphorylase</fullName>
            <ecNumber evidence="1">2.7.7.23</ecNumber>
        </recommendedName>
        <alternativeName>
            <fullName evidence="1">N-acetylglucosamine-1-phosphate uridyltransferase</fullName>
        </alternativeName>
    </domain>
    <domain>
        <recommendedName>
            <fullName evidence="1">Glucosamine-1-phosphate N-acetyltransferase</fullName>
            <ecNumber evidence="1">2.3.1.157</ecNumber>
        </recommendedName>
    </domain>
</protein>
<accession>Q0I9Y4</accession>
<feature type="chain" id="PRO_0000263163" description="Bifunctional protein GlmU">
    <location>
        <begin position="1"/>
        <end position="454"/>
    </location>
</feature>
<feature type="region of interest" description="Pyrophosphorylase" evidence="1">
    <location>
        <begin position="1"/>
        <end position="226"/>
    </location>
</feature>
<feature type="region of interest" description="Linker" evidence="1">
    <location>
        <begin position="227"/>
        <end position="247"/>
    </location>
</feature>
<feature type="region of interest" description="N-acetyltransferase" evidence="1">
    <location>
        <begin position="248"/>
        <end position="454"/>
    </location>
</feature>
<feature type="active site" description="Proton acceptor" evidence="1">
    <location>
        <position position="359"/>
    </location>
</feature>
<feature type="binding site" evidence="1">
    <location>
        <begin position="7"/>
        <end position="10"/>
    </location>
    <ligand>
        <name>UDP-N-acetyl-alpha-D-glucosamine</name>
        <dbReference type="ChEBI" id="CHEBI:57705"/>
    </ligand>
</feature>
<feature type="binding site" evidence="1">
    <location>
        <position position="21"/>
    </location>
    <ligand>
        <name>UDP-N-acetyl-alpha-D-glucosamine</name>
        <dbReference type="ChEBI" id="CHEBI:57705"/>
    </ligand>
</feature>
<feature type="binding site" evidence="1">
    <location>
        <position position="73"/>
    </location>
    <ligand>
        <name>UDP-N-acetyl-alpha-D-glucosamine</name>
        <dbReference type="ChEBI" id="CHEBI:57705"/>
    </ligand>
</feature>
<feature type="binding site" evidence="1">
    <location>
        <begin position="78"/>
        <end position="79"/>
    </location>
    <ligand>
        <name>UDP-N-acetyl-alpha-D-glucosamine</name>
        <dbReference type="ChEBI" id="CHEBI:57705"/>
    </ligand>
</feature>
<feature type="binding site" evidence="1">
    <location>
        <position position="103"/>
    </location>
    <ligand>
        <name>Mg(2+)</name>
        <dbReference type="ChEBI" id="CHEBI:18420"/>
    </ligand>
</feature>
<feature type="binding site" evidence="1">
    <location>
        <position position="140"/>
    </location>
    <ligand>
        <name>UDP-N-acetyl-alpha-D-glucosamine</name>
        <dbReference type="ChEBI" id="CHEBI:57705"/>
    </ligand>
</feature>
<feature type="binding site" evidence="1">
    <location>
        <position position="155"/>
    </location>
    <ligand>
        <name>UDP-N-acetyl-alpha-D-glucosamine</name>
        <dbReference type="ChEBI" id="CHEBI:57705"/>
    </ligand>
</feature>
<feature type="binding site" evidence="1">
    <location>
        <position position="170"/>
    </location>
    <ligand>
        <name>UDP-N-acetyl-alpha-D-glucosamine</name>
        <dbReference type="ChEBI" id="CHEBI:57705"/>
    </ligand>
</feature>
<feature type="binding site" evidence="1">
    <location>
        <position position="224"/>
    </location>
    <ligand>
        <name>Mg(2+)</name>
        <dbReference type="ChEBI" id="CHEBI:18420"/>
    </ligand>
</feature>
<feature type="binding site" evidence="1">
    <location>
        <position position="224"/>
    </location>
    <ligand>
        <name>UDP-N-acetyl-alpha-D-glucosamine</name>
        <dbReference type="ChEBI" id="CHEBI:57705"/>
    </ligand>
</feature>
<feature type="binding site" evidence="1">
    <location>
        <position position="329"/>
    </location>
    <ligand>
        <name>UDP-N-acetyl-alpha-D-glucosamine</name>
        <dbReference type="ChEBI" id="CHEBI:57705"/>
    </ligand>
</feature>
<feature type="binding site" evidence="1">
    <location>
        <position position="347"/>
    </location>
    <ligand>
        <name>UDP-N-acetyl-alpha-D-glucosamine</name>
        <dbReference type="ChEBI" id="CHEBI:57705"/>
    </ligand>
</feature>
<feature type="binding site" evidence="1">
    <location>
        <position position="362"/>
    </location>
    <ligand>
        <name>UDP-N-acetyl-alpha-D-glucosamine</name>
        <dbReference type="ChEBI" id="CHEBI:57705"/>
    </ligand>
</feature>
<feature type="binding site" evidence="1">
    <location>
        <position position="373"/>
    </location>
    <ligand>
        <name>UDP-N-acetyl-alpha-D-glucosamine</name>
        <dbReference type="ChEBI" id="CHEBI:57705"/>
    </ligand>
</feature>
<feature type="binding site" evidence="1">
    <location>
        <position position="376"/>
    </location>
    <ligand>
        <name>acetyl-CoA</name>
        <dbReference type="ChEBI" id="CHEBI:57288"/>
    </ligand>
</feature>
<feature type="binding site" evidence="1">
    <location>
        <position position="419"/>
    </location>
    <ligand>
        <name>acetyl-CoA</name>
        <dbReference type="ChEBI" id="CHEBI:57288"/>
    </ligand>
</feature>
<feature type="binding site" evidence="1">
    <location>
        <position position="436"/>
    </location>
    <ligand>
        <name>acetyl-CoA</name>
        <dbReference type="ChEBI" id="CHEBI:57288"/>
    </ligand>
</feature>
<dbReference type="EC" id="2.7.7.23" evidence="1"/>
<dbReference type="EC" id="2.3.1.157" evidence="1"/>
<dbReference type="EMBL" id="CP000435">
    <property type="protein sequence ID" value="ABI45030.1"/>
    <property type="molecule type" value="Genomic_DNA"/>
</dbReference>
<dbReference type="RefSeq" id="WP_011619455.1">
    <property type="nucleotide sequence ID" value="NC_008319.1"/>
</dbReference>
<dbReference type="SMR" id="Q0I9Y4"/>
<dbReference type="STRING" id="64471.sync_1533"/>
<dbReference type="KEGG" id="syg:sync_1533"/>
<dbReference type="eggNOG" id="COG1207">
    <property type="taxonomic scope" value="Bacteria"/>
</dbReference>
<dbReference type="HOGENOM" id="CLU_029499_15_2_3"/>
<dbReference type="OrthoDB" id="9775031at2"/>
<dbReference type="UniPathway" id="UPA00113">
    <property type="reaction ID" value="UER00532"/>
</dbReference>
<dbReference type="UniPathway" id="UPA00113">
    <property type="reaction ID" value="UER00533"/>
</dbReference>
<dbReference type="UniPathway" id="UPA00973"/>
<dbReference type="Proteomes" id="UP000001961">
    <property type="component" value="Chromosome"/>
</dbReference>
<dbReference type="GO" id="GO:0031470">
    <property type="term" value="C:carboxysome"/>
    <property type="evidence" value="ECO:0007669"/>
    <property type="project" value="UniProtKB-ARBA"/>
</dbReference>
<dbReference type="GO" id="GO:0005737">
    <property type="term" value="C:cytoplasm"/>
    <property type="evidence" value="ECO:0007669"/>
    <property type="project" value="UniProtKB-SubCell"/>
</dbReference>
<dbReference type="GO" id="GO:0016020">
    <property type="term" value="C:membrane"/>
    <property type="evidence" value="ECO:0007669"/>
    <property type="project" value="GOC"/>
</dbReference>
<dbReference type="GO" id="GO:0019134">
    <property type="term" value="F:glucosamine-1-phosphate N-acetyltransferase activity"/>
    <property type="evidence" value="ECO:0007669"/>
    <property type="project" value="UniProtKB-UniRule"/>
</dbReference>
<dbReference type="GO" id="GO:0000287">
    <property type="term" value="F:magnesium ion binding"/>
    <property type="evidence" value="ECO:0007669"/>
    <property type="project" value="UniProtKB-UniRule"/>
</dbReference>
<dbReference type="GO" id="GO:0043886">
    <property type="term" value="F:structural constituent of carboxysome shell"/>
    <property type="evidence" value="ECO:0007669"/>
    <property type="project" value="UniProtKB-ARBA"/>
</dbReference>
<dbReference type="GO" id="GO:0003977">
    <property type="term" value="F:UDP-N-acetylglucosamine diphosphorylase activity"/>
    <property type="evidence" value="ECO:0007669"/>
    <property type="project" value="UniProtKB-UniRule"/>
</dbReference>
<dbReference type="GO" id="GO:0000902">
    <property type="term" value="P:cell morphogenesis"/>
    <property type="evidence" value="ECO:0007669"/>
    <property type="project" value="UniProtKB-UniRule"/>
</dbReference>
<dbReference type="GO" id="GO:0071555">
    <property type="term" value="P:cell wall organization"/>
    <property type="evidence" value="ECO:0007669"/>
    <property type="project" value="UniProtKB-KW"/>
</dbReference>
<dbReference type="GO" id="GO:0009245">
    <property type="term" value="P:lipid A biosynthetic process"/>
    <property type="evidence" value="ECO:0007669"/>
    <property type="project" value="UniProtKB-UniRule"/>
</dbReference>
<dbReference type="GO" id="GO:0009252">
    <property type="term" value="P:peptidoglycan biosynthetic process"/>
    <property type="evidence" value="ECO:0007669"/>
    <property type="project" value="UniProtKB-UniRule"/>
</dbReference>
<dbReference type="GO" id="GO:0008360">
    <property type="term" value="P:regulation of cell shape"/>
    <property type="evidence" value="ECO:0007669"/>
    <property type="project" value="UniProtKB-KW"/>
</dbReference>
<dbReference type="GO" id="GO:0006048">
    <property type="term" value="P:UDP-N-acetylglucosamine biosynthetic process"/>
    <property type="evidence" value="ECO:0007669"/>
    <property type="project" value="UniProtKB-UniPathway"/>
</dbReference>
<dbReference type="CDD" id="cd02540">
    <property type="entry name" value="GT2_GlmU_N_bac"/>
    <property type="match status" value="1"/>
</dbReference>
<dbReference type="CDD" id="cd03353">
    <property type="entry name" value="LbH_GlmU_C"/>
    <property type="match status" value="1"/>
</dbReference>
<dbReference type="Gene3D" id="2.160.10.10">
    <property type="entry name" value="Hexapeptide repeat proteins"/>
    <property type="match status" value="1"/>
</dbReference>
<dbReference type="Gene3D" id="3.90.550.10">
    <property type="entry name" value="Spore Coat Polysaccharide Biosynthesis Protein SpsA, Chain A"/>
    <property type="match status" value="1"/>
</dbReference>
<dbReference type="HAMAP" id="MF_01631">
    <property type="entry name" value="GlmU"/>
    <property type="match status" value="1"/>
</dbReference>
<dbReference type="InterPro" id="IPR005882">
    <property type="entry name" value="Bifunctional_GlmU"/>
</dbReference>
<dbReference type="InterPro" id="IPR050065">
    <property type="entry name" value="GlmU-like"/>
</dbReference>
<dbReference type="InterPro" id="IPR038009">
    <property type="entry name" value="GlmU_C_LbH"/>
</dbReference>
<dbReference type="InterPro" id="IPR001451">
    <property type="entry name" value="Hexapep"/>
</dbReference>
<dbReference type="InterPro" id="IPR025877">
    <property type="entry name" value="MobA-like_NTP_Trfase"/>
</dbReference>
<dbReference type="InterPro" id="IPR029044">
    <property type="entry name" value="Nucleotide-diphossugar_trans"/>
</dbReference>
<dbReference type="InterPro" id="IPR011004">
    <property type="entry name" value="Trimer_LpxA-like_sf"/>
</dbReference>
<dbReference type="NCBIfam" id="TIGR01173">
    <property type="entry name" value="glmU"/>
    <property type="match status" value="1"/>
</dbReference>
<dbReference type="NCBIfam" id="NF010940">
    <property type="entry name" value="PRK14360.1"/>
    <property type="match status" value="1"/>
</dbReference>
<dbReference type="PANTHER" id="PTHR43584:SF3">
    <property type="entry name" value="BIFUNCTIONAL PROTEIN GLMU"/>
    <property type="match status" value="1"/>
</dbReference>
<dbReference type="PANTHER" id="PTHR43584">
    <property type="entry name" value="NUCLEOTIDYL TRANSFERASE"/>
    <property type="match status" value="1"/>
</dbReference>
<dbReference type="Pfam" id="PF00132">
    <property type="entry name" value="Hexapep"/>
    <property type="match status" value="3"/>
</dbReference>
<dbReference type="Pfam" id="PF12804">
    <property type="entry name" value="NTP_transf_3"/>
    <property type="match status" value="1"/>
</dbReference>
<dbReference type="SUPFAM" id="SSF53448">
    <property type="entry name" value="Nucleotide-diphospho-sugar transferases"/>
    <property type="match status" value="1"/>
</dbReference>
<dbReference type="SUPFAM" id="SSF51161">
    <property type="entry name" value="Trimeric LpxA-like enzymes"/>
    <property type="match status" value="1"/>
</dbReference>
<comment type="function">
    <text evidence="1">Catalyzes the last two sequential reactions in the de novo biosynthetic pathway for UDP-N-acetylglucosamine (UDP-GlcNAc). The C-terminal domain catalyzes the transfer of acetyl group from acetyl coenzyme A to glucosamine-1-phosphate (GlcN-1-P) to produce N-acetylglucosamine-1-phosphate (GlcNAc-1-P), which is converted into UDP-GlcNAc by the transfer of uridine 5-monophosphate (from uridine 5-triphosphate), a reaction catalyzed by the N-terminal domain.</text>
</comment>
<comment type="catalytic activity">
    <reaction evidence="1">
        <text>alpha-D-glucosamine 1-phosphate + acetyl-CoA = N-acetyl-alpha-D-glucosamine 1-phosphate + CoA + H(+)</text>
        <dbReference type="Rhea" id="RHEA:13725"/>
        <dbReference type="ChEBI" id="CHEBI:15378"/>
        <dbReference type="ChEBI" id="CHEBI:57287"/>
        <dbReference type="ChEBI" id="CHEBI:57288"/>
        <dbReference type="ChEBI" id="CHEBI:57776"/>
        <dbReference type="ChEBI" id="CHEBI:58516"/>
        <dbReference type="EC" id="2.3.1.157"/>
    </reaction>
</comment>
<comment type="catalytic activity">
    <reaction evidence="1">
        <text>N-acetyl-alpha-D-glucosamine 1-phosphate + UTP + H(+) = UDP-N-acetyl-alpha-D-glucosamine + diphosphate</text>
        <dbReference type="Rhea" id="RHEA:13509"/>
        <dbReference type="ChEBI" id="CHEBI:15378"/>
        <dbReference type="ChEBI" id="CHEBI:33019"/>
        <dbReference type="ChEBI" id="CHEBI:46398"/>
        <dbReference type="ChEBI" id="CHEBI:57705"/>
        <dbReference type="ChEBI" id="CHEBI:57776"/>
        <dbReference type="EC" id="2.7.7.23"/>
    </reaction>
</comment>
<comment type="cofactor">
    <cofactor evidence="1">
        <name>Mg(2+)</name>
        <dbReference type="ChEBI" id="CHEBI:18420"/>
    </cofactor>
    <text evidence="1">Binds 1 Mg(2+) ion per subunit.</text>
</comment>
<comment type="pathway">
    <text evidence="1">Nucleotide-sugar biosynthesis; UDP-N-acetyl-alpha-D-glucosamine biosynthesis; N-acetyl-alpha-D-glucosamine 1-phosphate from alpha-D-glucosamine 6-phosphate (route II): step 2/2.</text>
</comment>
<comment type="pathway">
    <text evidence="1">Nucleotide-sugar biosynthesis; UDP-N-acetyl-alpha-D-glucosamine biosynthesis; UDP-N-acetyl-alpha-D-glucosamine from N-acetyl-alpha-D-glucosamine 1-phosphate: step 1/1.</text>
</comment>
<comment type="pathway">
    <text evidence="1">Bacterial outer membrane biogenesis; LPS lipid A biosynthesis.</text>
</comment>
<comment type="subunit">
    <text evidence="1">Homotrimer.</text>
</comment>
<comment type="subcellular location">
    <subcellularLocation>
        <location evidence="1">Cytoplasm</location>
    </subcellularLocation>
</comment>
<comment type="similarity">
    <text evidence="1">In the N-terminal section; belongs to the N-acetylglucosamine-1-phosphate uridyltransferase family.</text>
</comment>
<comment type="similarity">
    <text evidence="1">In the C-terminal section; belongs to the transferase hexapeptide repeat family.</text>
</comment>
<proteinExistence type="inferred from homology"/>
<reference key="1">
    <citation type="journal article" date="2006" name="Proc. Natl. Acad. Sci. U.S.A.">
        <title>Genome sequence of Synechococcus CC9311: insights into adaptation to a coastal environment.</title>
        <authorList>
            <person name="Palenik B."/>
            <person name="Ren Q."/>
            <person name="Dupont C.L."/>
            <person name="Myers G.S."/>
            <person name="Heidelberg J.F."/>
            <person name="Badger J.H."/>
            <person name="Madupu R."/>
            <person name="Nelson W.C."/>
            <person name="Brinkac L.M."/>
            <person name="Dodson R.J."/>
            <person name="Durkin A.S."/>
            <person name="Daugherty S.C."/>
            <person name="Sullivan S.A."/>
            <person name="Khouri H."/>
            <person name="Mohamoud Y."/>
            <person name="Halpin R."/>
            <person name="Paulsen I.T."/>
        </authorList>
    </citation>
    <scope>NUCLEOTIDE SEQUENCE [LARGE SCALE GENOMIC DNA]</scope>
    <source>
        <strain>CC9311</strain>
    </source>
</reference>
<gene>
    <name evidence="1" type="primary">glmU</name>
    <name type="ordered locus">sync_1533</name>
</gene>
<keyword id="KW-0012">Acyltransferase</keyword>
<keyword id="KW-0133">Cell shape</keyword>
<keyword id="KW-0961">Cell wall biogenesis/degradation</keyword>
<keyword id="KW-0963">Cytoplasm</keyword>
<keyword id="KW-0460">Magnesium</keyword>
<keyword id="KW-0479">Metal-binding</keyword>
<keyword id="KW-0511">Multifunctional enzyme</keyword>
<keyword id="KW-0548">Nucleotidyltransferase</keyword>
<keyword id="KW-0573">Peptidoglycan synthesis</keyword>
<keyword id="KW-1185">Reference proteome</keyword>
<keyword id="KW-0677">Repeat</keyword>
<keyword id="KW-0808">Transferase</keyword>
<organism>
    <name type="scientific">Synechococcus sp. (strain CC9311)</name>
    <dbReference type="NCBI Taxonomy" id="64471"/>
    <lineage>
        <taxon>Bacteria</taxon>
        <taxon>Bacillati</taxon>
        <taxon>Cyanobacteriota</taxon>
        <taxon>Cyanophyceae</taxon>
        <taxon>Synechococcales</taxon>
        <taxon>Synechococcaceae</taxon>
        <taxon>Synechococcus</taxon>
    </lineage>
</organism>